<evidence type="ECO:0000255" key="1"/>
<evidence type="ECO:0000256" key="2">
    <source>
        <dbReference type="SAM" id="MobiDB-lite"/>
    </source>
</evidence>
<evidence type="ECO:0000269" key="3">
    <source>
    </source>
</evidence>
<evidence type="ECO:0000269" key="4">
    <source>
    </source>
</evidence>
<evidence type="ECO:0000303" key="5">
    <source>
    </source>
</evidence>
<evidence type="ECO:0000303" key="6">
    <source>
    </source>
</evidence>
<evidence type="ECO:0000305" key="7"/>
<evidence type="ECO:0000305" key="8">
    <source>
    </source>
</evidence>
<evidence type="ECO:0000305" key="9">
    <source>
    </source>
</evidence>
<evidence type="ECO:0000312" key="10">
    <source>
        <dbReference type="EMBL" id="CCP46543.1"/>
    </source>
</evidence>
<evidence type="ECO:0007744" key="11">
    <source>
        <dbReference type="PDB" id="4LQ6"/>
    </source>
</evidence>
<evidence type="ECO:0007744" key="12">
    <source>
        <dbReference type="PDB" id="4M6G"/>
    </source>
</evidence>
<evidence type="ECO:0007744" key="13">
    <source>
        <dbReference type="PDB" id="4M6I"/>
    </source>
</evidence>
<protein>
    <recommendedName>
        <fullName evidence="5 6">N-acetylmuramoyl-L-alanine amidase Rv3717</fullName>
        <ecNumber evidence="3 4">3.5.1.28</ecNumber>
    </recommendedName>
    <alternativeName>
        <fullName evidence="5">Zinc-dependent peptidoglycan amidase</fullName>
    </alternativeName>
</protein>
<proteinExistence type="evidence at protein level"/>
<sequence>MIVGVLVAAATPIISSASATPANIAGMVVFIDPGHNGANDASIGRQVPTGRGGTKNCQASGTSTNSGYPEHTFTWETGLRLRAALNALGVRTALSRGNDNALGPCVDERANMANALRPNAIVSLHADGGPASGRGFHVNYSAPPLNAIQAGPSVQFARIMRDQLQASGIPKANYIGQDGLYGRSDLAGLNLAQYPSILVELGNMKNPADSALMESAEGRQKYANALVRGVAGFLATQGQAR</sequence>
<reference key="1">
    <citation type="journal article" date="1998" name="Nature">
        <title>Deciphering the biology of Mycobacterium tuberculosis from the complete genome sequence.</title>
        <authorList>
            <person name="Cole S.T."/>
            <person name="Brosch R."/>
            <person name="Parkhill J."/>
            <person name="Garnier T."/>
            <person name="Churcher C.M."/>
            <person name="Harris D.E."/>
            <person name="Gordon S.V."/>
            <person name="Eiglmeier K."/>
            <person name="Gas S."/>
            <person name="Barry C.E. III"/>
            <person name="Tekaia F."/>
            <person name="Badcock K."/>
            <person name="Basham D."/>
            <person name="Brown D."/>
            <person name="Chillingworth T."/>
            <person name="Connor R."/>
            <person name="Davies R.M."/>
            <person name="Devlin K."/>
            <person name="Feltwell T."/>
            <person name="Gentles S."/>
            <person name="Hamlin N."/>
            <person name="Holroyd S."/>
            <person name="Hornsby T."/>
            <person name="Jagels K."/>
            <person name="Krogh A."/>
            <person name="McLean J."/>
            <person name="Moule S."/>
            <person name="Murphy L.D."/>
            <person name="Oliver S."/>
            <person name="Osborne J."/>
            <person name="Quail M.A."/>
            <person name="Rajandream M.A."/>
            <person name="Rogers J."/>
            <person name="Rutter S."/>
            <person name="Seeger K."/>
            <person name="Skelton S."/>
            <person name="Squares S."/>
            <person name="Squares R."/>
            <person name="Sulston J.E."/>
            <person name="Taylor K."/>
            <person name="Whitehead S."/>
            <person name="Barrell B.G."/>
        </authorList>
    </citation>
    <scope>NUCLEOTIDE SEQUENCE [LARGE SCALE GENOMIC DNA]</scope>
    <source>
        <strain>ATCC 25618 / H37Rv</strain>
    </source>
</reference>
<reference key="2">
    <citation type="journal article" date="2011" name="Mol. Cell. Proteomics">
        <title>Proteogenomic analysis of Mycobacterium tuberculosis by high resolution mass spectrometry.</title>
        <authorList>
            <person name="Kelkar D.S."/>
            <person name="Kumar D."/>
            <person name="Kumar P."/>
            <person name="Balakrishnan L."/>
            <person name="Muthusamy B."/>
            <person name="Yadav A.K."/>
            <person name="Shrivastava P."/>
            <person name="Marimuthu A."/>
            <person name="Anand S."/>
            <person name="Sundaram H."/>
            <person name="Kingsbury R."/>
            <person name="Harsha H.C."/>
            <person name="Nair B."/>
            <person name="Prasad T.S."/>
            <person name="Chauhan D.S."/>
            <person name="Katoch K."/>
            <person name="Katoch V.M."/>
            <person name="Kumar P."/>
            <person name="Chaerkady R."/>
            <person name="Ramachandran S."/>
            <person name="Dash D."/>
            <person name="Pandey A."/>
        </authorList>
    </citation>
    <scope>IDENTIFICATION BY MASS SPECTROMETRY [LARGE SCALE ANALYSIS]</scope>
    <source>
        <strain>ATCC 25618 / H37Rv</strain>
    </source>
</reference>
<reference key="3">
    <citation type="journal article" date="2013" name="Acta Crystallogr. D">
        <title>The structure of Rv3717 reveals a novel amidase from Mycobacterium tuberculosis.</title>
        <authorList>
            <person name="Kumar A."/>
            <person name="Kumar S."/>
            <person name="Kumar D."/>
            <person name="Mishra A."/>
            <person name="Dewangan R.P."/>
            <person name="Shrivastava P."/>
            <person name="Ramachandran S."/>
            <person name="Taneja B."/>
        </authorList>
    </citation>
    <scope>X-RAY CRYSTALLOGRAPHY (1.68 ANGSTROMS) OF 25-241 IN COMPLEX WITH ZINC</scope>
    <scope>FUNCTION</scope>
    <scope>CATALYTIC ACTIVITY</scope>
    <scope>SUBSTRATE SPECIFICITY</scope>
    <scope>COFACTOR</scope>
    <scope>ACTIVITY REGULATION</scope>
    <scope>SUBUNIT</scope>
    <scope>PATHWAY</scope>
    <source>
        <strain>H37Rv</strain>
    </source>
</reference>
<reference key="4">
    <citation type="journal article" date="2013" name="J. Biol. Chem.">
        <title>Structural and biochemical analyses of Mycobacterium tuberculosis N-acetylmuramyl-L-alanine amidase Rv3717 point to a role in peptidoglycan fragment recycling.</title>
        <authorList>
            <person name="Prigozhin D.M."/>
            <person name="Mavrici D."/>
            <person name="Huizar J.P."/>
            <person name="Vansell H.J."/>
            <person name="Alber T."/>
        </authorList>
    </citation>
    <scope>X-RAY CRYSTALLOGRAPHY (2.10 ANGSTROMS) OF 20-241 OF APOENZYME AND IN COMPLEXES WITH ZINC AND THE DIPEPTIDE PRODUCT L-ALANINE-ISO-D-GLUTAMINE</scope>
    <scope>FUNCTION</scope>
    <scope>CATALYTIC ACTIVITY</scope>
    <scope>COFACTOR</scope>
    <scope>DISULFIDE BOND</scope>
    <scope>MUTAGENESIS OF GLU-200</scope>
    <scope>ACTIVE SITE</scope>
    <scope>PATHWAY</scope>
</reference>
<name>PEPAM_MYCTU</name>
<keyword id="KW-0002">3D-structure</keyword>
<keyword id="KW-0961">Cell wall biogenesis/degradation</keyword>
<keyword id="KW-1015">Disulfide bond</keyword>
<keyword id="KW-0378">Hydrolase</keyword>
<keyword id="KW-0479">Metal-binding</keyword>
<keyword id="KW-0574">Periplasm</keyword>
<keyword id="KW-1185">Reference proteome</keyword>
<keyword id="KW-0732">Signal</keyword>
<keyword id="KW-0862">Zinc</keyword>
<accession>I6Y4D2</accession>
<feature type="signal peptide" evidence="1">
    <location>
        <begin position="1"/>
        <end position="24"/>
    </location>
</feature>
<feature type="chain" id="PRO_5004159884" description="N-acetylmuramoyl-L-alanine amidase Rv3717">
    <location>
        <begin position="25"/>
        <end position="241"/>
    </location>
</feature>
<feature type="domain" description="MurNAc-LAA" evidence="1">
    <location>
        <begin position="29"/>
        <end position="230"/>
    </location>
</feature>
<feature type="region of interest" description="Disordered" evidence="2">
    <location>
        <begin position="45"/>
        <end position="69"/>
    </location>
</feature>
<feature type="compositionally biased region" description="Polar residues" evidence="2">
    <location>
        <begin position="55"/>
        <end position="67"/>
    </location>
</feature>
<feature type="active site" description="Proton donor/acceptor" evidence="8">
    <location>
        <position position="200"/>
    </location>
</feature>
<feature type="binding site" evidence="3 4 11 12 13">
    <location>
        <position position="35"/>
    </location>
    <ligand>
        <name>Zn(2+)</name>
        <dbReference type="ChEBI" id="CHEBI:29105"/>
    </ligand>
</feature>
<feature type="binding site" evidence="3 4 11 12 13">
    <location>
        <position position="70"/>
    </location>
    <ligand>
        <name>Zn(2+)</name>
        <dbReference type="ChEBI" id="CHEBI:29105"/>
    </ligand>
</feature>
<feature type="binding site" evidence="3 4 11 12 13">
    <location>
        <position position="125"/>
    </location>
    <ligand>
        <name>Zn(2+)</name>
        <dbReference type="ChEBI" id="CHEBI:29105"/>
    </ligand>
</feature>
<feature type="disulfide bond" evidence="3">
    <location>
        <begin position="57"/>
        <end position="105"/>
    </location>
</feature>
<feature type="mutagenesis site" description="Loss of catalytic activity." evidence="3">
    <original>E</original>
    <variation>A</variation>
    <variation>Q</variation>
    <location>
        <position position="200"/>
    </location>
</feature>
<organism>
    <name type="scientific">Mycobacterium tuberculosis (strain ATCC 25618 / H37Rv)</name>
    <dbReference type="NCBI Taxonomy" id="83332"/>
    <lineage>
        <taxon>Bacteria</taxon>
        <taxon>Bacillati</taxon>
        <taxon>Actinomycetota</taxon>
        <taxon>Actinomycetes</taxon>
        <taxon>Mycobacteriales</taxon>
        <taxon>Mycobacteriaceae</taxon>
        <taxon>Mycobacterium</taxon>
        <taxon>Mycobacterium tuberculosis complex</taxon>
    </lineage>
</organism>
<gene>
    <name evidence="10" type="ordered locus">Rv3717</name>
</gene>
<dbReference type="EC" id="3.5.1.28" evidence="3 4"/>
<dbReference type="EMBL" id="AL123456">
    <property type="protein sequence ID" value="CCP46543.1"/>
    <property type="molecule type" value="Genomic_DNA"/>
</dbReference>
<dbReference type="RefSeq" id="NP_218234.1">
    <property type="nucleotide sequence ID" value="NC_000962.3"/>
</dbReference>
<dbReference type="RefSeq" id="WP_003420410.1">
    <property type="nucleotide sequence ID" value="NC_000962.3"/>
</dbReference>
<dbReference type="PDB" id="4LQ6">
    <property type="method" value="X-ray"/>
    <property type="resolution" value="1.68 A"/>
    <property type="chains" value="A=25-241"/>
</dbReference>
<dbReference type="PDB" id="4M6G">
    <property type="method" value="X-ray"/>
    <property type="resolution" value="2.10 A"/>
    <property type="chains" value="A=20-241"/>
</dbReference>
<dbReference type="PDB" id="4M6H">
    <property type="method" value="X-ray"/>
    <property type="resolution" value="2.19 A"/>
    <property type="chains" value="A/B=20-241"/>
</dbReference>
<dbReference type="PDB" id="4M6I">
    <property type="method" value="X-ray"/>
    <property type="resolution" value="2.67 A"/>
    <property type="chains" value="A/B=20-241"/>
</dbReference>
<dbReference type="PDB" id="9CUN">
    <property type="method" value="X-ray"/>
    <property type="resolution" value="1.45 A"/>
    <property type="chains" value="A=25-241"/>
</dbReference>
<dbReference type="PDBsum" id="4LQ6"/>
<dbReference type="PDBsum" id="4M6G"/>
<dbReference type="PDBsum" id="4M6H"/>
<dbReference type="PDBsum" id="4M6I"/>
<dbReference type="PDBsum" id="9CUN"/>
<dbReference type="SMR" id="I6Y4D2"/>
<dbReference type="STRING" id="83332.Rv3717"/>
<dbReference type="PaxDb" id="83332-Rv3717"/>
<dbReference type="DNASU" id="885602"/>
<dbReference type="GeneID" id="885602"/>
<dbReference type="KEGG" id="mtu:Rv3717"/>
<dbReference type="KEGG" id="mtv:RVBD_3717"/>
<dbReference type="PATRIC" id="fig|83332.111.peg.4133"/>
<dbReference type="TubercuList" id="Rv3717"/>
<dbReference type="eggNOG" id="COG0860">
    <property type="taxonomic scope" value="Bacteria"/>
</dbReference>
<dbReference type="InParanoid" id="I6Y4D2"/>
<dbReference type="OrthoDB" id="3268878at2"/>
<dbReference type="PhylomeDB" id="I6Y4D2"/>
<dbReference type="BRENDA" id="3.5.1.28">
    <property type="organism ID" value="3445"/>
</dbReference>
<dbReference type="UniPathway" id="UPA00549"/>
<dbReference type="PHI-base" id="PHI:10542"/>
<dbReference type="PHI-base" id="PHI:11336"/>
<dbReference type="Proteomes" id="UP000001584">
    <property type="component" value="Chromosome"/>
</dbReference>
<dbReference type="GO" id="GO:0030288">
    <property type="term" value="C:outer membrane-bounded periplasmic space"/>
    <property type="evidence" value="ECO:0000318"/>
    <property type="project" value="GO_Central"/>
</dbReference>
<dbReference type="GO" id="GO:0046872">
    <property type="term" value="F:metal ion binding"/>
    <property type="evidence" value="ECO:0007669"/>
    <property type="project" value="UniProtKB-KW"/>
</dbReference>
<dbReference type="GO" id="GO:0008745">
    <property type="term" value="F:N-acetylmuramoyl-L-alanine amidase activity"/>
    <property type="evidence" value="ECO:0000318"/>
    <property type="project" value="GO_Central"/>
</dbReference>
<dbReference type="GO" id="GO:0016998">
    <property type="term" value="P:cell wall macromolecule catabolic process"/>
    <property type="evidence" value="ECO:0007669"/>
    <property type="project" value="UniProtKB-UniPathway"/>
</dbReference>
<dbReference type="GO" id="GO:0071555">
    <property type="term" value="P:cell wall organization"/>
    <property type="evidence" value="ECO:0007669"/>
    <property type="project" value="UniProtKB-KW"/>
</dbReference>
<dbReference type="GO" id="GO:0043093">
    <property type="term" value="P:FtsZ-dependent cytokinesis"/>
    <property type="evidence" value="ECO:0000318"/>
    <property type="project" value="GO_Central"/>
</dbReference>
<dbReference type="GO" id="GO:0009253">
    <property type="term" value="P:peptidoglycan catabolic process"/>
    <property type="evidence" value="ECO:0007669"/>
    <property type="project" value="InterPro"/>
</dbReference>
<dbReference type="CDD" id="cd02696">
    <property type="entry name" value="MurNAc-LAA"/>
    <property type="match status" value="1"/>
</dbReference>
<dbReference type="FunFam" id="3.40.630.40:FF:000008">
    <property type="entry name" value="N-acetylmuramoyl-L-alanine amidase LytC"/>
    <property type="match status" value="1"/>
</dbReference>
<dbReference type="Gene3D" id="3.40.630.40">
    <property type="entry name" value="Zn-dependent exopeptidases"/>
    <property type="match status" value="1"/>
</dbReference>
<dbReference type="InterPro" id="IPR002508">
    <property type="entry name" value="MurNAc-LAA_cat"/>
</dbReference>
<dbReference type="InterPro" id="IPR050695">
    <property type="entry name" value="N-acetylmuramoyl_amidase_3"/>
</dbReference>
<dbReference type="NCBIfam" id="NF038140">
    <property type="entry name" value="amidase_Rv3717"/>
    <property type="match status" value="1"/>
</dbReference>
<dbReference type="PANTHER" id="PTHR30404">
    <property type="entry name" value="N-ACETYLMURAMOYL-L-ALANINE AMIDASE"/>
    <property type="match status" value="1"/>
</dbReference>
<dbReference type="PANTHER" id="PTHR30404:SF0">
    <property type="entry name" value="N-ACETYLMURAMOYL-L-ALANINE AMIDASE AMIC"/>
    <property type="match status" value="1"/>
</dbReference>
<dbReference type="Pfam" id="PF01520">
    <property type="entry name" value="Amidase_3"/>
    <property type="match status" value="1"/>
</dbReference>
<dbReference type="SMART" id="SM00646">
    <property type="entry name" value="Ami_3"/>
    <property type="match status" value="1"/>
</dbReference>
<dbReference type="SUPFAM" id="SSF53187">
    <property type="entry name" value="Zn-dependent exopeptidases"/>
    <property type="match status" value="1"/>
</dbReference>
<comment type="function">
    <text evidence="3 4">Cell-wall hydrolase that hydrolyzes the amide bond between N-acetylmuramic acid and L-alanine in cell-wall glycopeptides (PubMed:24019530, PubMed:24311595). Is able to hydrolyze the cell walls of several bacterial species (i.e. Paenibacillus sp., B.avium, E.coli DH5alpha, E.aerogenes, L.acidophilus, B.thuringiensis, B.pumilus, B.subtilis and E.coli W3110), thereby showing that it is a cell-wall hydrolase with broad-spectrum activity (PubMed:24311595). May have a role in peptidoglycan fragment recycling (PubMed:24019530).</text>
</comment>
<comment type="catalytic activity">
    <reaction evidence="3 4">
        <text>Hydrolyzes the link between N-acetylmuramoyl residues and L-amino acid residues in certain cell-wall glycopeptides.</text>
        <dbReference type="EC" id="3.5.1.28"/>
    </reaction>
</comment>
<comment type="cofactor">
    <cofactor evidence="3 4">
        <name>Zn(2+)</name>
        <dbReference type="ChEBI" id="CHEBI:29105"/>
    </cofactor>
</comment>
<comment type="activity regulation">
    <text evidence="9">The structure reveals a short flexible hairpin turn that partially occludes the active site and may be involved in autoregulation.</text>
</comment>
<comment type="pathway">
    <text evidence="3 4">Cell wall degradation; peptidoglycan degradation.</text>
</comment>
<comment type="subunit">
    <text evidence="4">Monomer.</text>
</comment>
<comment type="subcellular location">
    <subcellularLocation>
        <location evidence="8">Periplasm</location>
    </subcellularLocation>
</comment>
<comment type="miscellaneous">
    <text evidence="3">Disulfide oxidation is not required for folding of the enzyme core or in vitro muramyl dipeptide hydrolysis.</text>
</comment>
<comment type="similarity">
    <text evidence="7">Belongs to the N-acetylmuramoyl-L-alanine amidase 3 family.</text>
</comment>